<keyword id="KW-0131">Cell cycle</keyword>
<keyword id="KW-0132">Cell division</keyword>
<keyword id="KW-0133">Cell shape</keyword>
<keyword id="KW-0961">Cell wall biogenesis/degradation</keyword>
<keyword id="KW-0963">Cytoplasm</keyword>
<keyword id="KW-0274">FAD</keyword>
<keyword id="KW-0285">Flavoprotein</keyword>
<keyword id="KW-0521">NADP</keyword>
<keyword id="KW-0560">Oxidoreductase</keyword>
<keyword id="KW-0573">Peptidoglycan synthesis</keyword>
<keyword id="KW-1185">Reference proteome</keyword>
<sequence>MLSLKEFNTFGLSAYAKRLDIAESAESLLALWQKAKSEKQPVLLLGGGSNVLFTTNFEGTVILNRIMGIQQRETDESWHLHVGAGENWHELVCHSLKNQIYGLENLALIPGCSGAAPIQNIGAYGIEFRDVCEYVDVLNLETGEQTRLSVGECQFRYRDSIFKHKYKANHSIISVGLLLKKNWQPILNYGNLTRLSKDNVTPQQIFDSVCAMRTSKLPDPAITGNAGSFFKNPIVSAEVAAKIKENYPDSPQYSYTNGMFKLAAAWLIERCNLKGYRIGGASVHLRQALVLINQENATGKDVVLLAAYIRRQVISKFGVLLEPEVRFIGSKGEIDAVECIS</sequence>
<reference key="1">
    <citation type="journal article" date="2003" name="Nat. Biotechnol.">
        <title>The genome sequence of the entomopathogenic bacterium Photorhabdus luminescens.</title>
        <authorList>
            <person name="Duchaud E."/>
            <person name="Rusniok C."/>
            <person name="Frangeul L."/>
            <person name="Buchrieser C."/>
            <person name="Givaudan A."/>
            <person name="Taourit S."/>
            <person name="Bocs S."/>
            <person name="Boursaux-Eude C."/>
            <person name="Chandler M."/>
            <person name="Charles J.-F."/>
            <person name="Dassa E."/>
            <person name="Derose R."/>
            <person name="Derzelle S."/>
            <person name="Freyssinet G."/>
            <person name="Gaudriault S."/>
            <person name="Medigue C."/>
            <person name="Lanois A."/>
            <person name="Powell K."/>
            <person name="Siguier P."/>
            <person name="Vincent R."/>
            <person name="Wingate V."/>
            <person name="Zouine M."/>
            <person name="Glaser P."/>
            <person name="Boemare N."/>
            <person name="Danchin A."/>
            <person name="Kunst F."/>
        </authorList>
    </citation>
    <scope>NUCLEOTIDE SEQUENCE [LARGE SCALE GENOMIC DNA]</scope>
    <source>
        <strain>DSM 15139 / CIP 105565 / TT01</strain>
    </source>
</reference>
<comment type="function">
    <text evidence="1">Cell wall formation.</text>
</comment>
<comment type="catalytic activity">
    <reaction evidence="1">
        <text>UDP-N-acetyl-alpha-D-muramate + NADP(+) = UDP-N-acetyl-3-O-(1-carboxyvinyl)-alpha-D-glucosamine + NADPH + H(+)</text>
        <dbReference type="Rhea" id="RHEA:12248"/>
        <dbReference type="ChEBI" id="CHEBI:15378"/>
        <dbReference type="ChEBI" id="CHEBI:57783"/>
        <dbReference type="ChEBI" id="CHEBI:58349"/>
        <dbReference type="ChEBI" id="CHEBI:68483"/>
        <dbReference type="ChEBI" id="CHEBI:70757"/>
        <dbReference type="EC" id="1.3.1.98"/>
    </reaction>
</comment>
<comment type="cofactor">
    <cofactor evidence="1">
        <name>FAD</name>
        <dbReference type="ChEBI" id="CHEBI:57692"/>
    </cofactor>
</comment>
<comment type="pathway">
    <text evidence="1">Cell wall biogenesis; peptidoglycan biosynthesis.</text>
</comment>
<comment type="subcellular location">
    <subcellularLocation>
        <location evidence="1">Cytoplasm</location>
    </subcellularLocation>
</comment>
<comment type="similarity">
    <text evidence="1">Belongs to the MurB family.</text>
</comment>
<protein>
    <recommendedName>
        <fullName evidence="1">UDP-N-acetylenolpyruvoylglucosamine reductase</fullName>
        <ecNumber evidence="1">1.3.1.98</ecNumber>
    </recommendedName>
    <alternativeName>
        <fullName evidence="1">UDP-N-acetylmuramate dehydrogenase</fullName>
    </alternativeName>
</protein>
<accession>Q7MYE5</accession>
<proteinExistence type="inferred from homology"/>
<organism>
    <name type="scientific">Photorhabdus laumondii subsp. laumondii (strain DSM 15139 / CIP 105565 / TT01)</name>
    <name type="common">Photorhabdus luminescens subsp. laumondii</name>
    <dbReference type="NCBI Taxonomy" id="243265"/>
    <lineage>
        <taxon>Bacteria</taxon>
        <taxon>Pseudomonadati</taxon>
        <taxon>Pseudomonadota</taxon>
        <taxon>Gammaproteobacteria</taxon>
        <taxon>Enterobacterales</taxon>
        <taxon>Morganellaceae</taxon>
        <taxon>Photorhabdus</taxon>
    </lineage>
</organism>
<name>MURB_PHOLL</name>
<evidence type="ECO:0000255" key="1">
    <source>
        <dbReference type="HAMAP-Rule" id="MF_00037"/>
    </source>
</evidence>
<feature type="chain" id="PRO_0000179237" description="UDP-N-acetylenolpyruvoylglucosamine reductase">
    <location>
        <begin position="1"/>
        <end position="341"/>
    </location>
</feature>
<feature type="domain" description="FAD-binding PCMH-type" evidence="1">
    <location>
        <begin position="12"/>
        <end position="182"/>
    </location>
</feature>
<feature type="active site" evidence="1">
    <location>
        <position position="158"/>
    </location>
</feature>
<feature type="active site" description="Proton donor" evidence="1">
    <location>
        <position position="228"/>
    </location>
</feature>
<feature type="active site" evidence="1">
    <location>
        <position position="324"/>
    </location>
</feature>
<dbReference type="EC" id="1.3.1.98" evidence="1"/>
<dbReference type="EMBL" id="BX571874">
    <property type="protein sequence ID" value="CAE17105.1"/>
    <property type="molecule type" value="Genomic_DNA"/>
</dbReference>
<dbReference type="RefSeq" id="WP_011148801.1">
    <property type="nucleotide sequence ID" value="NC_005126.1"/>
</dbReference>
<dbReference type="SMR" id="Q7MYE5"/>
<dbReference type="STRING" id="243265.plu4733"/>
<dbReference type="GeneID" id="48850962"/>
<dbReference type="KEGG" id="plu:plu4733"/>
<dbReference type="eggNOG" id="COG0812">
    <property type="taxonomic scope" value="Bacteria"/>
</dbReference>
<dbReference type="HOGENOM" id="CLU_035304_0_0_6"/>
<dbReference type="OrthoDB" id="9804753at2"/>
<dbReference type="UniPathway" id="UPA00219"/>
<dbReference type="Proteomes" id="UP000002514">
    <property type="component" value="Chromosome"/>
</dbReference>
<dbReference type="GO" id="GO:0005829">
    <property type="term" value="C:cytosol"/>
    <property type="evidence" value="ECO:0007669"/>
    <property type="project" value="TreeGrafter"/>
</dbReference>
<dbReference type="GO" id="GO:0071949">
    <property type="term" value="F:FAD binding"/>
    <property type="evidence" value="ECO:0007669"/>
    <property type="project" value="InterPro"/>
</dbReference>
<dbReference type="GO" id="GO:0008762">
    <property type="term" value="F:UDP-N-acetylmuramate dehydrogenase activity"/>
    <property type="evidence" value="ECO:0007669"/>
    <property type="project" value="UniProtKB-UniRule"/>
</dbReference>
<dbReference type="GO" id="GO:0051301">
    <property type="term" value="P:cell division"/>
    <property type="evidence" value="ECO:0007669"/>
    <property type="project" value="UniProtKB-KW"/>
</dbReference>
<dbReference type="GO" id="GO:0071555">
    <property type="term" value="P:cell wall organization"/>
    <property type="evidence" value="ECO:0007669"/>
    <property type="project" value="UniProtKB-KW"/>
</dbReference>
<dbReference type="GO" id="GO:0009252">
    <property type="term" value="P:peptidoglycan biosynthetic process"/>
    <property type="evidence" value="ECO:0007669"/>
    <property type="project" value="UniProtKB-UniRule"/>
</dbReference>
<dbReference type="GO" id="GO:0008360">
    <property type="term" value="P:regulation of cell shape"/>
    <property type="evidence" value="ECO:0007669"/>
    <property type="project" value="UniProtKB-KW"/>
</dbReference>
<dbReference type="Gene3D" id="3.30.465.10">
    <property type="match status" value="1"/>
</dbReference>
<dbReference type="Gene3D" id="3.90.78.10">
    <property type="entry name" value="UDP-N-acetylenolpyruvoylglucosamine reductase, C-terminal domain"/>
    <property type="match status" value="1"/>
</dbReference>
<dbReference type="Gene3D" id="3.30.43.10">
    <property type="entry name" value="Uridine Diphospho-n-acetylenolpyruvylglucosamine Reductase, domain 2"/>
    <property type="match status" value="1"/>
</dbReference>
<dbReference type="HAMAP" id="MF_00037">
    <property type="entry name" value="MurB"/>
    <property type="match status" value="1"/>
</dbReference>
<dbReference type="InterPro" id="IPR016166">
    <property type="entry name" value="FAD-bd_PCMH"/>
</dbReference>
<dbReference type="InterPro" id="IPR036318">
    <property type="entry name" value="FAD-bd_PCMH-like_sf"/>
</dbReference>
<dbReference type="InterPro" id="IPR016167">
    <property type="entry name" value="FAD-bd_PCMH_sub1"/>
</dbReference>
<dbReference type="InterPro" id="IPR016169">
    <property type="entry name" value="FAD-bd_PCMH_sub2"/>
</dbReference>
<dbReference type="InterPro" id="IPR003170">
    <property type="entry name" value="MurB"/>
</dbReference>
<dbReference type="InterPro" id="IPR011601">
    <property type="entry name" value="MurB_C"/>
</dbReference>
<dbReference type="InterPro" id="IPR036635">
    <property type="entry name" value="MurB_C_sf"/>
</dbReference>
<dbReference type="InterPro" id="IPR006094">
    <property type="entry name" value="Oxid_FAD_bind_N"/>
</dbReference>
<dbReference type="NCBIfam" id="TIGR00179">
    <property type="entry name" value="murB"/>
    <property type="match status" value="1"/>
</dbReference>
<dbReference type="NCBIfam" id="NF000755">
    <property type="entry name" value="PRK00046.1"/>
    <property type="match status" value="1"/>
</dbReference>
<dbReference type="PANTHER" id="PTHR21071">
    <property type="entry name" value="UDP-N-ACETYLENOLPYRUVOYLGLUCOSAMINE REDUCTASE"/>
    <property type="match status" value="1"/>
</dbReference>
<dbReference type="PANTHER" id="PTHR21071:SF4">
    <property type="entry name" value="UDP-N-ACETYLENOLPYRUVOYLGLUCOSAMINE REDUCTASE"/>
    <property type="match status" value="1"/>
</dbReference>
<dbReference type="Pfam" id="PF01565">
    <property type="entry name" value="FAD_binding_4"/>
    <property type="match status" value="1"/>
</dbReference>
<dbReference type="Pfam" id="PF02873">
    <property type="entry name" value="MurB_C"/>
    <property type="match status" value="1"/>
</dbReference>
<dbReference type="SUPFAM" id="SSF56176">
    <property type="entry name" value="FAD-binding/transporter-associated domain-like"/>
    <property type="match status" value="1"/>
</dbReference>
<dbReference type="SUPFAM" id="SSF56194">
    <property type="entry name" value="Uridine diphospho-N-Acetylenolpyruvylglucosamine reductase, MurB, C-terminal domain"/>
    <property type="match status" value="1"/>
</dbReference>
<dbReference type="PROSITE" id="PS51387">
    <property type="entry name" value="FAD_PCMH"/>
    <property type="match status" value="1"/>
</dbReference>
<gene>
    <name evidence="1" type="primary">murB</name>
    <name type="ordered locus">plu4733</name>
</gene>